<comment type="function">
    <text evidence="1">Catalyzes a trans-dehydration via an enolate intermediate.</text>
</comment>
<comment type="catalytic activity">
    <reaction evidence="1">
        <text>3-dehydroquinate = 3-dehydroshikimate + H2O</text>
        <dbReference type="Rhea" id="RHEA:21096"/>
        <dbReference type="ChEBI" id="CHEBI:15377"/>
        <dbReference type="ChEBI" id="CHEBI:16630"/>
        <dbReference type="ChEBI" id="CHEBI:32364"/>
        <dbReference type="EC" id="4.2.1.10"/>
    </reaction>
</comment>
<comment type="pathway">
    <text evidence="1">Metabolic intermediate biosynthesis; chorismate biosynthesis; chorismate from D-erythrose 4-phosphate and phosphoenolpyruvate: step 3/7.</text>
</comment>
<comment type="subunit">
    <text evidence="1">Homododecamer.</text>
</comment>
<comment type="similarity">
    <text evidence="1">Belongs to the type-II 3-dehydroquinase family.</text>
</comment>
<keyword id="KW-0028">Amino-acid biosynthesis</keyword>
<keyword id="KW-0057">Aromatic amino acid biosynthesis</keyword>
<keyword id="KW-0456">Lyase</keyword>
<keyword id="KW-1185">Reference proteome</keyword>
<organism>
    <name type="scientific">Idiomarina loihiensis (strain ATCC BAA-735 / DSM 15497 / L2-TR)</name>
    <dbReference type="NCBI Taxonomy" id="283942"/>
    <lineage>
        <taxon>Bacteria</taxon>
        <taxon>Pseudomonadati</taxon>
        <taxon>Pseudomonadota</taxon>
        <taxon>Gammaproteobacteria</taxon>
        <taxon>Alteromonadales</taxon>
        <taxon>Idiomarinaceae</taxon>
        <taxon>Idiomarina</taxon>
    </lineage>
</organism>
<name>AROQ_IDILO</name>
<dbReference type="EC" id="4.2.1.10" evidence="1"/>
<dbReference type="EMBL" id="AE017340">
    <property type="protein sequence ID" value="AAV83116.1"/>
    <property type="molecule type" value="Genomic_DNA"/>
</dbReference>
<dbReference type="RefSeq" id="WP_011235510.1">
    <property type="nucleotide sequence ID" value="NC_006512.1"/>
</dbReference>
<dbReference type="SMR" id="Q5QVU2"/>
<dbReference type="STRING" id="283942.IL2284"/>
<dbReference type="GeneID" id="41337478"/>
<dbReference type="KEGG" id="ilo:IL2284"/>
<dbReference type="eggNOG" id="COG0757">
    <property type="taxonomic scope" value="Bacteria"/>
</dbReference>
<dbReference type="HOGENOM" id="CLU_090968_1_0_6"/>
<dbReference type="OrthoDB" id="9790793at2"/>
<dbReference type="UniPathway" id="UPA00053">
    <property type="reaction ID" value="UER00086"/>
</dbReference>
<dbReference type="Proteomes" id="UP000001171">
    <property type="component" value="Chromosome"/>
</dbReference>
<dbReference type="GO" id="GO:0003855">
    <property type="term" value="F:3-dehydroquinate dehydratase activity"/>
    <property type="evidence" value="ECO:0007669"/>
    <property type="project" value="UniProtKB-UniRule"/>
</dbReference>
<dbReference type="GO" id="GO:0008652">
    <property type="term" value="P:amino acid biosynthetic process"/>
    <property type="evidence" value="ECO:0007669"/>
    <property type="project" value="UniProtKB-KW"/>
</dbReference>
<dbReference type="GO" id="GO:0009073">
    <property type="term" value="P:aromatic amino acid family biosynthetic process"/>
    <property type="evidence" value="ECO:0007669"/>
    <property type="project" value="UniProtKB-KW"/>
</dbReference>
<dbReference type="GO" id="GO:0009423">
    <property type="term" value="P:chorismate biosynthetic process"/>
    <property type="evidence" value="ECO:0007669"/>
    <property type="project" value="UniProtKB-UniRule"/>
</dbReference>
<dbReference type="GO" id="GO:0019631">
    <property type="term" value="P:quinate catabolic process"/>
    <property type="evidence" value="ECO:0007669"/>
    <property type="project" value="TreeGrafter"/>
</dbReference>
<dbReference type="CDD" id="cd00466">
    <property type="entry name" value="DHQase_II"/>
    <property type="match status" value="1"/>
</dbReference>
<dbReference type="Gene3D" id="3.40.50.9100">
    <property type="entry name" value="Dehydroquinase, class II"/>
    <property type="match status" value="1"/>
</dbReference>
<dbReference type="HAMAP" id="MF_00169">
    <property type="entry name" value="AroQ"/>
    <property type="match status" value="1"/>
</dbReference>
<dbReference type="InterPro" id="IPR001874">
    <property type="entry name" value="DHquinase_II"/>
</dbReference>
<dbReference type="InterPro" id="IPR018509">
    <property type="entry name" value="DHquinase_II_CS"/>
</dbReference>
<dbReference type="InterPro" id="IPR036441">
    <property type="entry name" value="DHquinase_II_sf"/>
</dbReference>
<dbReference type="NCBIfam" id="TIGR01088">
    <property type="entry name" value="aroQ"/>
    <property type="match status" value="1"/>
</dbReference>
<dbReference type="NCBIfam" id="NF003804">
    <property type="entry name" value="PRK05395.1-1"/>
    <property type="match status" value="1"/>
</dbReference>
<dbReference type="NCBIfam" id="NF003805">
    <property type="entry name" value="PRK05395.1-2"/>
    <property type="match status" value="1"/>
</dbReference>
<dbReference type="NCBIfam" id="NF003806">
    <property type="entry name" value="PRK05395.1-3"/>
    <property type="match status" value="1"/>
</dbReference>
<dbReference type="NCBIfam" id="NF003807">
    <property type="entry name" value="PRK05395.1-4"/>
    <property type="match status" value="1"/>
</dbReference>
<dbReference type="PANTHER" id="PTHR21272">
    <property type="entry name" value="CATABOLIC 3-DEHYDROQUINASE"/>
    <property type="match status" value="1"/>
</dbReference>
<dbReference type="PANTHER" id="PTHR21272:SF3">
    <property type="entry name" value="CATABOLIC 3-DEHYDROQUINASE"/>
    <property type="match status" value="1"/>
</dbReference>
<dbReference type="Pfam" id="PF01220">
    <property type="entry name" value="DHquinase_II"/>
    <property type="match status" value="1"/>
</dbReference>
<dbReference type="PIRSF" id="PIRSF001399">
    <property type="entry name" value="DHquinase_II"/>
    <property type="match status" value="1"/>
</dbReference>
<dbReference type="SUPFAM" id="SSF52304">
    <property type="entry name" value="Type II 3-dehydroquinate dehydratase"/>
    <property type="match status" value="1"/>
</dbReference>
<dbReference type="PROSITE" id="PS01029">
    <property type="entry name" value="DEHYDROQUINASE_II"/>
    <property type="match status" value="1"/>
</dbReference>
<sequence length="152" mass="16832">MAERFKILVLNGPNLNLLGQREPELYGKQSLDDIADSLGAIAKQHATALDFRQSNAEHQLIDWIQQAAKDSVDYIVINPAAYAHTSVALRDALLAVKIPFIEVHLSNIYRRESFRHHSYLADVADGVICGLGARGYEYALQAALTTLNNTDN</sequence>
<gene>
    <name evidence="1" type="primary">aroQ</name>
    <name type="ordered locus">IL2284</name>
</gene>
<evidence type="ECO:0000255" key="1">
    <source>
        <dbReference type="HAMAP-Rule" id="MF_00169"/>
    </source>
</evidence>
<proteinExistence type="inferred from homology"/>
<feature type="chain" id="PRO_1000023478" description="3-dehydroquinate dehydratase">
    <location>
        <begin position="1"/>
        <end position="152"/>
    </location>
</feature>
<feature type="active site" description="Proton acceptor" evidence="1">
    <location>
        <position position="26"/>
    </location>
</feature>
<feature type="active site" description="Proton donor" evidence="1">
    <location>
        <position position="104"/>
    </location>
</feature>
<feature type="binding site" evidence="1">
    <location>
        <position position="78"/>
    </location>
    <ligand>
        <name>substrate</name>
    </ligand>
</feature>
<feature type="binding site" evidence="1">
    <location>
        <position position="84"/>
    </location>
    <ligand>
        <name>substrate</name>
    </ligand>
</feature>
<feature type="binding site" evidence="1">
    <location>
        <position position="91"/>
    </location>
    <ligand>
        <name>substrate</name>
    </ligand>
</feature>
<feature type="binding site" evidence="1">
    <location>
        <begin position="105"/>
        <end position="106"/>
    </location>
    <ligand>
        <name>substrate</name>
    </ligand>
</feature>
<feature type="binding site" evidence="1">
    <location>
        <position position="115"/>
    </location>
    <ligand>
        <name>substrate</name>
    </ligand>
</feature>
<feature type="site" description="Transition state stabilizer" evidence="1">
    <location>
        <position position="21"/>
    </location>
</feature>
<protein>
    <recommendedName>
        <fullName evidence="1">3-dehydroquinate dehydratase</fullName>
        <shortName evidence="1">3-dehydroquinase</shortName>
        <ecNumber evidence="1">4.2.1.10</ecNumber>
    </recommendedName>
    <alternativeName>
        <fullName evidence="1">Type II DHQase</fullName>
    </alternativeName>
</protein>
<accession>Q5QVU2</accession>
<reference key="1">
    <citation type="journal article" date="2004" name="Proc. Natl. Acad. Sci. U.S.A.">
        <title>Genome sequence of the deep-sea gamma-proteobacterium Idiomarina loihiensis reveals amino acid fermentation as a source of carbon and energy.</title>
        <authorList>
            <person name="Hou S."/>
            <person name="Saw J.H."/>
            <person name="Lee K.S."/>
            <person name="Freitas T.A."/>
            <person name="Belisle C."/>
            <person name="Kawarabayasi Y."/>
            <person name="Donachie S.P."/>
            <person name="Pikina A."/>
            <person name="Galperin M.Y."/>
            <person name="Koonin E.V."/>
            <person name="Makarova K.S."/>
            <person name="Omelchenko M.V."/>
            <person name="Sorokin A."/>
            <person name="Wolf Y.I."/>
            <person name="Li Q.X."/>
            <person name="Keum Y.S."/>
            <person name="Campbell S."/>
            <person name="Denery J."/>
            <person name="Aizawa S."/>
            <person name="Shibata S."/>
            <person name="Malahoff A."/>
            <person name="Alam M."/>
        </authorList>
    </citation>
    <scope>NUCLEOTIDE SEQUENCE [LARGE SCALE GENOMIC DNA]</scope>
    <source>
        <strain>ATCC BAA-735 / DSM 15497 / L2-TR</strain>
    </source>
</reference>